<gene>
    <name type="primary">USP46</name>
</gene>
<proteinExistence type="evidence at transcript level"/>
<feature type="chain" id="PRO_0000304740" description="Ubiquitin carboxyl-terminal hydrolase 46">
    <location>
        <begin position="1"/>
        <end position="366"/>
    </location>
</feature>
<feature type="domain" description="USP">
    <location>
        <begin position="35"/>
        <end position="365"/>
    </location>
</feature>
<feature type="active site" description="Nucleophile" evidence="3 4">
    <location>
        <position position="44"/>
    </location>
</feature>
<feature type="active site" description="Proton acceptor" evidence="3 4">
    <location>
        <position position="313"/>
    </location>
</feature>
<feature type="binding site" evidence="1">
    <location>
        <position position="182"/>
    </location>
    <ligand>
        <name>Zn(2+)</name>
        <dbReference type="ChEBI" id="CHEBI:29105"/>
    </ligand>
</feature>
<feature type="binding site" evidence="1">
    <location>
        <position position="185"/>
    </location>
    <ligand>
        <name>Zn(2+)</name>
        <dbReference type="ChEBI" id="CHEBI:29105"/>
    </ligand>
</feature>
<feature type="binding site" evidence="1">
    <location>
        <position position="229"/>
    </location>
    <ligand>
        <name>Zn(2+)</name>
        <dbReference type="ChEBI" id="CHEBI:29105"/>
    </ligand>
</feature>
<feature type="binding site" evidence="1">
    <location>
        <position position="232"/>
    </location>
    <ligand>
        <name>Zn(2+)</name>
        <dbReference type="ChEBI" id="CHEBI:29105"/>
    </ligand>
</feature>
<feature type="splice variant" id="VSP_037622" description="In isoform 2." evidence="5">
    <location>
        <begin position="13"/>
        <end position="39"/>
    </location>
</feature>
<sequence length="366" mass="42442">MTVRNIASICNMGTNASALEKDIGPEQFPINEHYFGLVNFGNTCYCNSVLQALYFCRPFRENVLAYKAQQKKKENLLTCLADLFHSIATQKKKVGVIPPKKFISRLRKENDLFDNYMQQDAHEFLNYLLNTIADILQEEKKQEKQNGKLKNGNMNEPAENNKPELTWVHEIFQGTLTNETRCLNCETVSSKDEDFLDLSVDVEQNTSITHCLRDFSNTETLCSEQKYYCETCCSKQEAQKRMRVKKLPMILALHLKRFKYMEQLHRYTKLSYRVVFPLELRLFNTSSDAVNLDRMYDLVAVVVHCGSGPNRGHYITIVKSHGFWLLFDDDIVEKIDAQAIEEFYGLTSDISKNSESGYILFYQSRE</sequence>
<accession>Q5RBQ4</accession>
<accession>Q5RBN2</accession>
<evidence type="ECO:0000250" key="1">
    <source>
        <dbReference type="UniProtKB" id="P62068"/>
    </source>
</evidence>
<evidence type="ECO:0000250" key="2">
    <source>
        <dbReference type="UniProtKB" id="P62069"/>
    </source>
</evidence>
<evidence type="ECO:0000255" key="3">
    <source>
        <dbReference type="PROSITE-ProRule" id="PRU10092"/>
    </source>
</evidence>
<evidence type="ECO:0000255" key="4">
    <source>
        <dbReference type="PROSITE-ProRule" id="PRU10093"/>
    </source>
</evidence>
<evidence type="ECO:0000303" key="5">
    <source ref="1"/>
</evidence>
<evidence type="ECO:0000305" key="6"/>
<protein>
    <recommendedName>
        <fullName>Ubiquitin carboxyl-terminal hydrolase 46</fullName>
        <ecNumber evidence="1">3.4.19.12</ecNumber>
    </recommendedName>
    <alternativeName>
        <fullName>Deubiquitinating enzyme 46</fullName>
    </alternativeName>
    <alternativeName>
        <fullName>Ubiquitin thioesterase 46</fullName>
    </alternativeName>
    <alternativeName>
        <fullName>Ubiquitin-specific-processing protease 46</fullName>
    </alternativeName>
</protein>
<organism>
    <name type="scientific">Pongo abelii</name>
    <name type="common">Sumatran orangutan</name>
    <name type="synonym">Pongo pygmaeus abelii</name>
    <dbReference type="NCBI Taxonomy" id="9601"/>
    <lineage>
        <taxon>Eukaryota</taxon>
        <taxon>Metazoa</taxon>
        <taxon>Chordata</taxon>
        <taxon>Craniata</taxon>
        <taxon>Vertebrata</taxon>
        <taxon>Euteleostomi</taxon>
        <taxon>Mammalia</taxon>
        <taxon>Eutheria</taxon>
        <taxon>Euarchontoglires</taxon>
        <taxon>Primates</taxon>
        <taxon>Haplorrhini</taxon>
        <taxon>Catarrhini</taxon>
        <taxon>Hominidae</taxon>
        <taxon>Pongo</taxon>
    </lineage>
</organism>
<name>UBP46_PONAB</name>
<keyword id="KW-0025">Alternative splicing</keyword>
<keyword id="KW-0085">Behavior</keyword>
<keyword id="KW-0963">Cytoplasm</keyword>
<keyword id="KW-0378">Hydrolase</keyword>
<keyword id="KW-0479">Metal-binding</keyword>
<keyword id="KW-0645">Protease</keyword>
<keyword id="KW-1185">Reference proteome</keyword>
<keyword id="KW-0788">Thiol protease</keyword>
<keyword id="KW-0833">Ubl conjugation pathway</keyword>
<keyword id="KW-0862">Zinc</keyword>
<dbReference type="EC" id="3.4.19.12" evidence="1"/>
<dbReference type="EMBL" id="CR858584">
    <property type="protein sequence ID" value="CAH90806.1"/>
    <property type="molecule type" value="mRNA"/>
</dbReference>
<dbReference type="EMBL" id="CR858606">
    <property type="protein sequence ID" value="CAH90828.1"/>
    <property type="molecule type" value="mRNA"/>
</dbReference>
<dbReference type="RefSeq" id="NP_001127337.1">
    <molecule id="Q5RBQ4-1"/>
    <property type="nucleotide sequence ID" value="NM_001133865.2"/>
</dbReference>
<dbReference type="RefSeq" id="NP_001128936.1">
    <molecule id="Q5RBQ4-2"/>
    <property type="nucleotide sequence ID" value="NM_001135464.2"/>
</dbReference>
<dbReference type="SMR" id="Q5RBQ4"/>
<dbReference type="FunCoup" id="Q5RBQ4">
    <property type="interactions" value="3088"/>
</dbReference>
<dbReference type="STRING" id="9601.ENSPPYP00000016505"/>
<dbReference type="Ensembl" id="ENSPPYT00000040326.1">
    <molecule id="Q5RBQ4-2"/>
    <property type="protein sequence ID" value="ENSPPYP00000032861.1"/>
    <property type="gene ID" value="ENSPPYG00000014777.2"/>
</dbReference>
<dbReference type="Ensembl" id="ENSPPYT00000046675.1">
    <molecule id="Q5RBQ4-1"/>
    <property type="protein sequence ID" value="ENSPPYP00000029459.1"/>
    <property type="gene ID" value="ENSPPYG00000014777.2"/>
</dbReference>
<dbReference type="GeneID" id="100189895"/>
<dbReference type="KEGG" id="pon:100189895"/>
<dbReference type="CTD" id="64854"/>
<dbReference type="eggNOG" id="KOG1864">
    <property type="taxonomic scope" value="Eukaryota"/>
</dbReference>
<dbReference type="GeneTree" id="ENSGT00940000153284"/>
<dbReference type="HOGENOM" id="CLU_008279_2_0_1"/>
<dbReference type="InParanoid" id="Q5RBQ4"/>
<dbReference type="OrthoDB" id="27652at2759"/>
<dbReference type="Proteomes" id="UP000001595">
    <property type="component" value="Chromosome 4"/>
</dbReference>
<dbReference type="GO" id="GO:0005737">
    <property type="term" value="C:cytoplasm"/>
    <property type="evidence" value="ECO:0000250"/>
    <property type="project" value="UniProtKB"/>
</dbReference>
<dbReference type="GO" id="GO:0005829">
    <property type="term" value="C:cytosol"/>
    <property type="evidence" value="ECO:0007669"/>
    <property type="project" value="TreeGrafter"/>
</dbReference>
<dbReference type="GO" id="GO:0005634">
    <property type="term" value="C:nucleus"/>
    <property type="evidence" value="ECO:0007669"/>
    <property type="project" value="TreeGrafter"/>
</dbReference>
<dbReference type="GO" id="GO:0004843">
    <property type="term" value="F:cysteine-type deubiquitinase activity"/>
    <property type="evidence" value="ECO:0000250"/>
    <property type="project" value="UniProtKB"/>
</dbReference>
<dbReference type="GO" id="GO:0046872">
    <property type="term" value="F:metal ion binding"/>
    <property type="evidence" value="ECO:0007669"/>
    <property type="project" value="UniProtKB-KW"/>
</dbReference>
<dbReference type="GO" id="GO:0016579">
    <property type="term" value="P:protein deubiquitination"/>
    <property type="evidence" value="ECO:0000250"/>
    <property type="project" value="UniProtKB"/>
</dbReference>
<dbReference type="GO" id="GO:0006508">
    <property type="term" value="P:proteolysis"/>
    <property type="evidence" value="ECO:0007669"/>
    <property type="project" value="UniProtKB-KW"/>
</dbReference>
<dbReference type="GO" id="GO:0032228">
    <property type="term" value="P:regulation of synaptic transmission, GABAergic"/>
    <property type="evidence" value="ECO:0000250"/>
    <property type="project" value="UniProtKB"/>
</dbReference>
<dbReference type="CDD" id="cd02663">
    <property type="entry name" value="Peptidase_C19G"/>
    <property type="match status" value="1"/>
</dbReference>
<dbReference type="FunFam" id="3.90.70.10:FF:000003">
    <property type="entry name" value="Ubiquitin carboxyl-terminal hydrolase 46"/>
    <property type="match status" value="1"/>
</dbReference>
<dbReference type="Gene3D" id="3.90.70.10">
    <property type="entry name" value="Cysteine proteinases"/>
    <property type="match status" value="1"/>
</dbReference>
<dbReference type="InterPro" id="IPR038765">
    <property type="entry name" value="Papain-like_cys_pep_sf"/>
</dbReference>
<dbReference type="InterPro" id="IPR050164">
    <property type="entry name" value="Peptidase_C19"/>
</dbReference>
<dbReference type="InterPro" id="IPR001394">
    <property type="entry name" value="Peptidase_C19_UCH"/>
</dbReference>
<dbReference type="InterPro" id="IPR018200">
    <property type="entry name" value="USP_CS"/>
</dbReference>
<dbReference type="InterPro" id="IPR028889">
    <property type="entry name" value="USP_dom"/>
</dbReference>
<dbReference type="PANTHER" id="PTHR24006">
    <property type="entry name" value="UBIQUITIN CARBOXYL-TERMINAL HYDROLASE"/>
    <property type="match status" value="1"/>
</dbReference>
<dbReference type="PANTHER" id="PTHR24006:SF714">
    <property type="entry name" value="UBIQUITIN CARBOXYL-TERMINAL HYDROLASE 46"/>
    <property type="match status" value="1"/>
</dbReference>
<dbReference type="Pfam" id="PF00443">
    <property type="entry name" value="UCH"/>
    <property type="match status" value="1"/>
</dbReference>
<dbReference type="SUPFAM" id="SSF54001">
    <property type="entry name" value="Cysteine proteinases"/>
    <property type="match status" value="1"/>
</dbReference>
<dbReference type="PROSITE" id="PS00972">
    <property type="entry name" value="USP_1"/>
    <property type="match status" value="1"/>
</dbReference>
<dbReference type="PROSITE" id="PS00973">
    <property type="entry name" value="USP_2"/>
    <property type="match status" value="1"/>
</dbReference>
<dbReference type="PROSITE" id="PS50235">
    <property type="entry name" value="USP_3"/>
    <property type="match status" value="1"/>
</dbReference>
<reference key="1">
    <citation type="submission" date="2004-11" db="EMBL/GenBank/DDBJ databases">
        <authorList>
            <consortium name="The German cDNA consortium"/>
        </authorList>
    </citation>
    <scope>NUCLEOTIDE SEQUENCE [LARGE SCALE MRNA] (ISOFORMS 1 AND 2)</scope>
    <source>
        <tissue>Kidney</tissue>
    </source>
</reference>
<comment type="function">
    <text evidence="1 2">Deubiquitinating enzyme that plays a role in behavior, possibly by regulating GABA action. May act by mediating the deubiquitination of GAD1/GAD67 (By similarity). Has almost no deubiquitinating activity by itself and requires the interaction with WDR48 to have a high activity. Not involved in deubiquitination of monoubiquitinated FANCD2 (By similarity).</text>
</comment>
<comment type="catalytic activity">
    <reaction evidence="1">
        <text>Thiol-dependent hydrolysis of ester, thioester, amide, peptide and isopeptide bonds formed by the C-terminal Gly of ubiquitin (a 76-residue protein attached to proteins as an intracellular targeting signal).</text>
        <dbReference type="EC" id="3.4.19.12"/>
    </reaction>
</comment>
<comment type="subunit">
    <text evidence="1">Interacts with WDR48. Interacts with WDR20. Interacts with DMWD. Component of the USP46/WDR20/WDR48 deubiquitinating complex.</text>
</comment>
<comment type="subcellular location">
    <subcellularLocation>
        <location evidence="1">Cytoplasm</location>
    </subcellularLocation>
    <text evidence="1">USP46/WDR48/WDR20 complex is predominantly cytoplasmic.</text>
</comment>
<comment type="alternative products">
    <event type="alternative splicing"/>
    <isoform>
        <id>Q5RBQ4-1</id>
        <name>1</name>
        <sequence type="displayed"/>
    </isoform>
    <isoform>
        <id>Q5RBQ4-2</id>
        <name>2</name>
        <sequence type="described" ref="VSP_037622"/>
    </isoform>
</comment>
<comment type="similarity">
    <text evidence="6">Belongs to the peptidase C19 family. USP12/USP46 subfamily.</text>
</comment>